<comment type="function">
    <text evidence="1">Catalyzes the cleavage of 5-oxoproline to form L-glutamate coupled to the hydrolysis of ATP to ADP and inorganic phosphate.</text>
</comment>
<comment type="catalytic activity">
    <reaction evidence="1">
        <text>5-oxo-L-proline + ATP + 2 H2O = L-glutamate + ADP + phosphate + H(+)</text>
        <dbReference type="Rhea" id="RHEA:10348"/>
        <dbReference type="ChEBI" id="CHEBI:15377"/>
        <dbReference type="ChEBI" id="CHEBI:15378"/>
        <dbReference type="ChEBI" id="CHEBI:29985"/>
        <dbReference type="ChEBI" id="CHEBI:30616"/>
        <dbReference type="ChEBI" id="CHEBI:43474"/>
        <dbReference type="ChEBI" id="CHEBI:58402"/>
        <dbReference type="ChEBI" id="CHEBI:456216"/>
        <dbReference type="EC" id="3.5.2.9"/>
    </reaction>
</comment>
<comment type="subunit">
    <text evidence="1">Forms a complex composed of PxpA, PxpB and PxpC.</text>
</comment>
<comment type="similarity">
    <text evidence="1">Belongs to the LamB/PxpA family.</text>
</comment>
<keyword id="KW-0067">ATP-binding</keyword>
<keyword id="KW-0378">Hydrolase</keyword>
<keyword id="KW-0547">Nucleotide-binding</keyword>
<keyword id="KW-1185">Reference proteome</keyword>
<reference key="1">
    <citation type="journal article" date="2008" name="J. Bacteriol.">
        <title>The genome of Heliobacterium modesticaldum, a phototrophic representative of the Firmicutes containing the simplest photosynthetic apparatus.</title>
        <authorList>
            <person name="Sattley W.M."/>
            <person name="Madigan M.T."/>
            <person name="Swingley W.D."/>
            <person name="Cheung P.C."/>
            <person name="Clocksin K.M."/>
            <person name="Conrad A.L."/>
            <person name="Dejesa L.C."/>
            <person name="Honchak B.M."/>
            <person name="Jung D.O."/>
            <person name="Karbach L.E."/>
            <person name="Kurdoglu A."/>
            <person name="Lahiri S."/>
            <person name="Mastrian S.D."/>
            <person name="Page L.E."/>
            <person name="Taylor H.L."/>
            <person name="Wang Z.T."/>
            <person name="Raymond J."/>
            <person name="Chen M."/>
            <person name="Blankenship R.E."/>
            <person name="Touchman J.W."/>
        </authorList>
    </citation>
    <scope>NUCLEOTIDE SEQUENCE [LARGE SCALE GENOMIC DNA]</scope>
    <source>
        <strain>ATCC 51547 / Ice1</strain>
    </source>
</reference>
<organism>
    <name type="scientific">Heliobacterium modesticaldum (strain ATCC 51547 / Ice1)</name>
    <dbReference type="NCBI Taxonomy" id="498761"/>
    <lineage>
        <taxon>Bacteria</taxon>
        <taxon>Bacillati</taxon>
        <taxon>Bacillota</taxon>
        <taxon>Clostridia</taxon>
        <taxon>Eubacteriales</taxon>
        <taxon>Heliobacteriaceae</taxon>
        <taxon>Heliomicrobium</taxon>
    </lineage>
</organism>
<gene>
    <name evidence="1" type="primary">pxpA</name>
    <name type="ordered locus">Helmi_10660</name>
    <name type="ORF">HM1_0870</name>
</gene>
<protein>
    <recommendedName>
        <fullName evidence="1">5-oxoprolinase subunit A</fullName>
        <shortName evidence="1">5-OPase subunit A</shortName>
        <ecNumber evidence="1">3.5.2.9</ecNumber>
    </recommendedName>
    <alternativeName>
        <fullName evidence="1">5-oxoprolinase (ATP-hydrolyzing) subunit A</fullName>
    </alternativeName>
</protein>
<evidence type="ECO:0000255" key="1">
    <source>
        <dbReference type="HAMAP-Rule" id="MF_00691"/>
    </source>
</evidence>
<sequence length="254" mass="26439">MRIDLNCDIGESFGAYRIGCDAEMIAIASSVNIACGFHGGDPDVMAVTVERALQSGVAIGAHPGFPDLAGFGRREMRLRPSEVTNLIIYQIGALQAFVQAAGGRLHHVKPHGALYNMAAVDDELAAAVALAVKRVDPQLVLYALAGSCLVETAKRLGLTVAQEAFVDRAYRSDGTLAPRNLAGAVITDPETAGTRAVAMVKTGCIPSMDGDLIRIDADTLCLHGDNPGAAAIAKAVRASLETAGIAVKAGFERT</sequence>
<feature type="chain" id="PRO_1000132061" description="5-oxoprolinase subunit A">
    <location>
        <begin position="1"/>
        <end position="254"/>
    </location>
</feature>
<accession>B0TAN9</accession>
<dbReference type="EC" id="3.5.2.9" evidence="1"/>
<dbReference type="EMBL" id="CP000930">
    <property type="protein sequence ID" value="ABZ83691.1"/>
    <property type="molecule type" value="Genomic_DNA"/>
</dbReference>
<dbReference type="RefSeq" id="WP_012282214.1">
    <property type="nucleotide sequence ID" value="NC_010337.2"/>
</dbReference>
<dbReference type="SMR" id="B0TAN9"/>
<dbReference type="STRING" id="498761.HM1_0870"/>
<dbReference type="KEGG" id="hmo:HM1_0870"/>
<dbReference type="eggNOG" id="COG1540">
    <property type="taxonomic scope" value="Bacteria"/>
</dbReference>
<dbReference type="HOGENOM" id="CLU_069535_0_0_9"/>
<dbReference type="OrthoDB" id="9773478at2"/>
<dbReference type="Proteomes" id="UP000008550">
    <property type="component" value="Chromosome"/>
</dbReference>
<dbReference type="GO" id="GO:0017168">
    <property type="term" value="F:5-oxoprolinase (ATP-hydrolyzing) activity"/>
    <property type="evidence" value="ECO:0007669"/>
    <property type="project" value="UniProtKB-UniRule"/>
</dbReference>
<dbReference type="GO" id="GO:0005524">
    <property type="term" value="F:ATP binding"/>
    <property type="evidence" value="ECO:0007669"/>
    <property type="project" value="UniProtKB-UniRule"/>
</dbReference>
<dbReference type="GO" id="GO:0005975">
    <property type="term" value="P:carbohydrate metabolic process"/>
    <property type="evidence" value="ECO:0007669"/>
    <property type="project" value="InterPro"/>
</dbReference>
<dbReference type="CDD" id="cd10787">
    <property type="entry name" value="LamB_YcsF_like"/>
    <property type="match status" value="1"/>
</dbReference>
<dbReference type="Gene3D" id="3.20.20.370">
    <property type="entry name" value="Glycoside hydrolase/deacetylase"/>
    <property type="match status" value="1"/>
</dbReference>
<dbReference type="HAMAP" id="MF_00691">
    <property type="entry name" value="PxpA"/>
    <property type="match status" value="1"/>
</dbReference>
<dbReference type="InterPro" id="IPR011330">
    <property type="entry name" value="Glyco_hydro/deAcase_b/a-brl"/>
</dbReference>
<dbReference type="InterPro" id="IPR005501">
    <property type="entry name" value="LamB/YcsF/PxpA-like"/>
</dbReference>
<dbReference type="NCBIfam" id="NF003814">
    <property type="entry name" value="PRK05406.1-3"/>
    <property type="match status" value="1"/>
</dbReference>
<dbReference type="NCBIfam" id="NF003816">
    <property type="entry name" value="PRK05406.1-5"/>
    <property type="match status" value="1"/>
</dbReference>
<dbReference type="PANTHER" id="PTHR30292:SF0">
    <property type="entry name" value="5-OXOPROLINASE SUBUNIT A"/>
    <property type="match status" value="1"/>
</dbReference>
<dbReference type="PANTHER" id="PTHR30292">
    <property type="entry name" value="UNCHARACTERIZED PROTEIN YBGL-RELATED"/>
    <property type="match status" value="1"/>
</dbReference>
<dbReference type="Pfam" id="PF03746">
    <property type="entry name" value="LamB_YcsF"/>
    <property type="match status" value="1"/>
</dbReference>
<dbReference type="SUPFAM" id="SSF88713">
    <property type="entry name" value="Glycoside hydrolase/deacetylase"/>
    <property type="match status" value="1"/>
</dbReference>
<proteinExistence type="inferred from homology"/>
<name>PXPA_HELMI</name>